<protein>
    <recommendedName>
        <fullName evidence="1">Glucose-6-phosphate isomerase</fullName>
        <shortName evidence="1">GPI</shortName>
        <ecNumber evidence="1">5.3.1.9</ecNumber>
    </recommendedName>
    <alternativeName>
        <fullName evidence="1">Phosphoglucose isomerase</fullName>
        <shortName evidence="1">PGI</shortName>
    </alternativeName>
    <alternativeName>
        <fullName evidence="1">Phosphohexose isomerase</fullName>
        <shortName evidence="1">PHI</shortName>
    </alternativeName>
</protein>
<proteinExistence type="inferred from homology"/>
<sequence length="525" mass="57700">MMGKGFLDCESLVALQEMALHPIDLTASGCLSEERIQKNSLSVEGFTYSYATERVDDRCLEALQGLTEERELIKQMECMQQGAIMNRIEGFQSESRPVLHTATRAWVRDQDLHEEAAAIARHSKEEALRLAEFLYIARAKFSTLVQIGIGGSELGPKAMYFAMQGSCPSDKRIFFVSNIDPDNAAEVLREIDLEQTLVVVVSKSGTTLEPAANEELFRQAYQNKGLSIAEHFVAVTSQGSPMDDKSRYLEVFHLWDSIGGRFSATSMVGGVVLGFAFGYEAFIEFLQGAAAIDAHALTPKMRENLPLLSAMLGVWNRNLLGYPTTAVIPYSTGLKYFTAHLQQCGMESNGKSISREGKEISFRTSPIIWGDVGTNCQHSFFQSLHQGTDIVPVEFIGFLHNQRGLDCVLSGSSSSQKLFANLVAQSLALAQGRDNANPNKRFKGNSPSSILVAQQLSPRIAGSLLAFYEHKFAFQGFCWGINSFDQEGVSLGKELATQIIGIMSGNAPVEFPEARGVLRLFNVLT</sequence>
<organism>
    <name type="scientific">Chlamydia trachomatis serovar L2 (strain ATCC VR-902B / DSM 19102 / 434/Bu)</name>
    <dbReference type="NCBI Taxonomy" id="471472"/>
    <lineage>
        <taxon>Bacteria</taxon>
        <taxon>Pseudomonadati</taxon>
        <taxon>Chlamydiota</taxon>
        <taxon>Chlamydiia</taxon>
        <taxon>Chlamydiales</taxon>
        <taxon>Chlamydiaceae</taxon>
        <taxon>Chlamydia/Chlamydophila group</taxon>
        <taxon>Chlamydia</taxon>
    </lineage>
</organism>
<name>G6PI_CHLT2</name>
<gene>
    <name evidence="1" type="primary">pgi</name>
    <name type="ordered locus">CTL0633</name>
</gene>
<feature type="chain" id="PRO_1000125705" description="Glucose-6-phosphate isomerase">
    <location>
        <begin position="1"/>
        <end position="525"/>
    </location>
</feature>
<feature type="active site" description="Proton donor" evidence="1">
    <location>
        <position position="347"/>
    </location>
</feature>
<feature type="active site" evidence="1">
    <location>
        <position position="378"/>
    </location>
</feature>
<feature type="active site" evidence="1">
    <location>
        <position position="493"/>
    </location>
</feature>
<feature type="sequence conflict" description="In Ref. 2; AAA75628." evidence="2" ref="2">
    <original>YIARAKFSTLV</original>
    <variation>ACLQVDSRGSP</variation>
    <location>
        <begin position="135"/>
        <end position="145"/>
    </location>
</feature>
<feature type="sequence conflict" description="In Ref. 2; AAA75628." evidence="2" ref="2">
    <original>G</original>
    <variation>K</variation>
    <location>
        <position position="150"/>
    </location>
</feature>
<feature type="sequence conflict" description="In Ref. 2; AAA75628." evidence="2" ref="2">
    <original>R</original>
    <variation>L</variation>
    <location>
        <position position="189"/>
    </location>
</feature>
<feature type="sequence conflict" description="In Ref. 2; AAA75628." evidence="2" ref="2">
    <original>R</original>
    <variation>A</variation>
    <location>
        <position position="247"/>
    </location>
</feature>
<feature type="sequence conflict" description="In Ref. 2; AAA75628." evidence="2" ref="2">
    <location>
        <position position="382"/>
    </location>
</feature>
<feature type="sequence conflict" description="In Ref. 2; AAA75628." evidence="2" ref="2">
    <original>S</original>
    <variation>T</variation>
    <location>
        <position position="412"/>
    </location>
</feature>
<accession>B0B7U7</accession>
<accession>O84382</accession>
<accession>Q46402</accession>
<reference key="1">
    <citation type="journal article" date="2008" name="Genome Res.">
        <title>Chlamydia trachomatis: genome sequence analysis of lymphogranuloma venereum isolates.</title>
        <authorList>
            <person name="Thomson N.R."/>
            <person name="Holden M.T.G."/>
            <person name="Carder C."/>
            <person name="Lennard N."/>
            <person name="Lockey S.J."/>
            <person name="Marsh P."/>
            <person name="Skipp P."/>
            <person name="O'Connor C.D."/>
            <person name="Goodhead I."/>
            <person name="Norbertzcak H."/>
            <person name="Harris B."/>
            <person name="Ormond D."/>
            <person name="Rance R."/>
            <person name="Quail M.A."/>
            <person name="Parkhill J."/>
            <person name="Stephens R.S."/>
            <person name="Clarke I.N."/>
        </authorList>
    </citation>
    <scope>NUCLEOTIDE SEQUENCE [LARGE SCALE GENOMIC DNA]</scope>
    <source>
        <strain>ATCC VR-902B / DSM 19102 / 434/Bu</strain>
    </source>
</reference>
<reference key="2">
    <citation type="journal article" date="1995" name="J. Bacteriol.">
        <title>Characterization of late gene promoters of Chlamydia trachomatis.</title>
        <authorList>
            <person name="Fahr M.J."/>
            <person name="Douglas A.L."/>
            <person name="Xia W."/>
            <person name="Hatch T.P."/>
        </authorList>
    </citation>
    <scope>NUCLEOTIDE SEQUENCE [GENOMIC DNA] OF 135-525</scope>
</reference>
<dbReference type="EC" id="5.3.1.9" evidence="1"/>
<dbReference type="EMBL" id="AM884176">
    <property type="protein sequence ID" value="CAP04073.1"/>
    <property type="molecule type" value="Genomic_DNA"/>
</dbReference>
<dbReference type="EMBL" id="L40822">
    <property type="protein sequence ID" value="AAA75628.1"/>
    <property type="status" value="ALT_FRAME"/>
    <property type="molecule type" value="Genomic_DNA"/>
</dbReference>
<dbReference type="PIR" id="F71521">
    <property type="entry name" value="F71521"/>
</dbReference>
<dbReference type="RefSeq" id="WP_009873769.1">
    <property type="nucleotide sequence ID" value="NC_010287.1"/>
</dbReference>
<dbReference type="RefSeq" id="YP_001654706.1">
    <property type="nucleotide sequence ID" value="NC_010287.1"/>
</dbReference>
<dbReference type="SMR" id="B0B7U7"/>
<dbReference type="KEGG" id="ctb:CTL0633"/>
<dbReference type="PATRIC" id="fig|471472.4.peg.683"/>
<dbReference type="HOGENOM" id="CLU_017947_3_1_0"/>
<dbReference type="UniPathway" id="UPA00109">
    <property type="reaction ID" value="UER00181"/>
</dbReference>
<dbReference type="UniPathway" id="UPA00138"/>
<dbReference type="Proteomes" id="UP001154402">
    <property type="component" value="Chromosome"/>
</dbReference>
<dbReference type="GO" id="GO:0005829">
    <property type="term" value="C:cytosol"/>
    <property type="evidence" value="ECO:0007669"/>
    <property type="project" value="TreeGrafter"/>
</dbReference>
<dbReference type="GO" id="GO:0097367">
    <property type="term" value="F:carbohydrate derivative binding"/>
    <property type="evidence" value="ECO:0007669"/>
    <property type="project" value="InterPro"/>
</dbReference>
<dbReference type="GO" id="GO:0004347">
    <property type="term" value="F:glucose-6-phosphate isomerase activity"/>
    <property type="evidence" value="ECO:0007669"/>
    <property type="project" value="UniProtKB-UniRule"/>
</dbReference>
<dbReference type="GO" id="GO:0048029">
    <property type="term" value="F:monosaccharide binding"/>
    <property type="evidence" value="ECO:0007669"/>
    <property type="project" value="TreeGrafter"/>
</dbReference>
<dbReference type="GO" id="GO:0006094">
    <property type="term" value="P:gluconeogenesis"/>
    <property type="evidence" value="ECO:0007669"/>
    <property type="project" value="UniProtKB-UniRule"/>
</dbReference>
<dbReference type="GO" id="GO:0051156">
    <property type="term" value="P:glucose 6-phosphate metabolic process"/>
    <property type="evidence" value="ECO:0007669"/>
    <property type="project" value="TreeGrafter"/>
</dbReference>
<dbReference type="GO" id="GO:0006096">
    <property type="term" value="P:glycolytic process"/>
    <property type="evidence" value="ECO:0007669"/>
    <property type="project" value="UniProtKB-UniRule"/>
</dbReference>
<dbReference type="CDD" id="cd05015">
    <property type="entry name" value="SIS_PGI_1"/>
    <property type="match status" value="1"/>
</dbReference>
<dbReference type="CDD" id="cd05016">
    <property type="entry name" value="SIS_PGI_2"/>
    <property type="match status" value="1"/>
</dbReference>
<dbReference type="Gene3D" id="1.10.1390.10">
    <property type="match status" value="1"/>
</dbReference>
<dbReference type="Gene3D" id="3.40.50.10490">
    <property type="entry name" value="Glucose-6-phosphate isomerase like protein, domain 1"/>
    <property type="match status" value="2"/>
</dbReference>
<dbReference type="HAMAP" id="MF_00473">
    <property type="entry name" value="G6P_isomerase"/>
    <property type="match status" value="1"/>
</dbReference>
<dbReference type="InterPro" id="IPR001672">
    <property type="entry name" value="G6P_Isomerase"/>
</dbReference>
<dbReference type="InterPro" id="IPR023096">
    <property type="entry name" value="G6P_Isomerase_C"/>
</dbReference>
<dbReference type="InterPro" id="IPR018189">
    <property type="entry name" value="Phosphoglucose_isomerase_CS"/>
</dbReference>
<dbReference type="InterPro" id="IPR046348">
    <property type="entry name" value="SIS_dom_sf"/>
</dbReference>
<dbReference type="InterPro" id="IPR035476">
    <property type="entry name" value="SIS_PGI_1"/>
</dbReference>
<dbReference type="InterPro" id="IPR035482">
    <property type="entry name" value="SIS_PGI_2"/>
</dbReference>
<dbReference type="NCBIfam" id="NF010695">
    <property type="entry name" value="PRK14095.1"/>
    <property type="match status" value="1"/>
</dbReference>
<dbReference type="PANTHER" id="PTHR11469">
    <property type="entry name" value="GLUCOSE-6-PHOSPHATE ISOMERASE"/>
    <property type="match status" value="1"/>
</dbReference>
<dbReference type="PANTHER" id="PTHR11469:SF1">
    <property type="entry name" value="GLUCOSE-6-PHOSPHATE ISOMERASE"/>
    <property type="match status" value="1"/>
</dbReference>
<dbReference type="Pfam" id="PF00342">
    <property type="entry name" value="PGI"/>
    <property type="match status" value="1"/>
</dbReference>
<dbReference type="PRINTS" id="PR00662">
    <property type="entry name" value="G6PISOMERASE"/>
</dbReference>
<dbReference type="SUPFAM" id="SSF53697">
    <property type="entry name" value="SIS domain"/>
    <property type="match status" value="1"/>
</dbReference>
<dbReference type="PROSITE" id="PS00765">
    <property type="entry name" value="P_GLUCOSE_ISOMERASE_1"/>
    <property type="match status" value="1"/>
</dbReference>
<dbReference type="PROSITE" id="PS00174">
    <property type="entry name" value="P_GLUCOSE_ISOMERASE_2"/>
    <property type="match status" value="1"/>
</dbReference>
<dbReference type="PROSITE" id="PS51463">
    <property type="entry name" value="P_GLUCOSE_ISOMERASE_3"/>
    <property type="match status" value="1"/>
</dbReference>
<keyword id="KW-0963">Cytoplasm</keyword>
<keyword id="KW-0312">Gluconeogenesis</keyword>
<keyword id="KW-0324">Glycolysis</keyword>
<keyword id="KW-0413">Isomerase</keyword>
<comment type="function">
    <text evidence="1">Catalyzes the reversible isomerization of glucose-6-phosphate to fructose-6-phosphate.</text>
</comment>
<comment type="catalytic activity">
    <reaction evidence="1">
        <text>alpha-D-glucose 6-phosphate = beta-D-fructose 6-phosphate</text>
        <dbReference type="Rhea" id="RHEA:11816"/>
        <dbReference type="ChEBI" id="CHEBI:57634"/>
        <dbReference type="ChEBI" id="CHEBI:58225"/>
        <dbReference type="EC" id="5.3.1.9"/>
    </reaction>
</comment>
<comment type="pathway">
    <text evidence="1">Carbohydrate biosynthesis; gluconeogenesis.</text>
</comment>
<comment type="pathway">
    <text evidence="1">Carbohydrate degradation; glycolysis; D-glyceraldehyde 3-phosphate and glycerone phosphate from D-glucose: step 2/4.</text>
</comment>
<comment type="subcellular location">
    <subcellularLocation>
        <location evidence="1">Cytoplasm</location>
    </subcellularLocation>
</comment>
<comment type="similarity">
    <text evidence="1">Belongs to the GPI family.</text>
</comment>
<comment type="sequence caution" evidence="2">
    <conflict type="frameshift">
        <sequence resource="EMBL-CDS" id="AAA75628"/>
    </conflict>
</comment>
<evidence type="ECO:0000255" key="1">
    <source>
        <dbReference type="HAMAP-Rule" id="MF_00473"/>
    </source>
</evidence>
<evidence type="ECO:0000305" key="2"/>